<proteinExistence type="inferred from homology"/>
<organism>
    <name type="scientific">Escherichia coli O8 (strain IAI1)</name>
    <dbReference type="NCBI Taxonomy" id="585034"/>
    <lineage>
        <taxon>Bacteria</taxon>
        <taxon>Pseudomonadati</taxon>
        <taxon>Pseudomonadota</taxon>
        <taxon>Gammaproteobacteria</taxon>
        <taxon>Enterobacterales</taxon>
        <taxon>Enterobacteriaceae</taxon>
        <taxon>Escherichia</taxon>
    </lineage>
</organism>
<reference key="1">
    <citation type="journal article" date="2009" name="PLoS Genet.">
        <title>Organised genome dynamics in the Escherichia coli species results in highly diverse adaptive paths.</title>
        <authorList>
            <person name="Touchon M."/>
            <person name="Hoede C."/>
            <person name="Tenaillon O."/>
            <person name="Barbe V."/>
            <person name="Baeriswyl S."/>
            <person name="Bidet P."/>
            <person name="Bingen E."/>
            <person name="Bonacorsi S."/>
            <person name="Bouchier C."/>
            <person name="Bouvet O."/>
            <person name="Calteau A."/>
            <person name="Chiapello H."/>
            <person name="Clermont O."/>
            <person name="Cruveiller S."/>
            <person name="Danchin A."/>
            <person name="Diard M."/>
            <person name="Dossat C."/>
            <person name="Karoui M.E."/>
            <person name="Frapy E."/>
            <person name="Garry L."/>
            <person name="Ghigo J.M."/>
            <person name="Gilles A.M."/>
            <person name="Johnson J."/>
            <person name="Le Bouguenec C."/>
            <person name="Lescat M."/>
            <person name="Mangenot S."/>
            <person name="Martinez-Jehanne V."/>
            <person name="Matic I."/>
            <person name="Nassif X."/>
            <person name="Oztas S."/>
            <person name="Petit M.A."/>
            <person name="Pichon C."/>
            <person name="Rouy Z."/>
            <person name="Ruf C.S."/>
            <person name="Schneider D."/>
            <person name="Tourret J."/>
            <person name="Vacherie B."/>
            <person name="Vallenet D."/>
            <person name="Medigue C."/>
            <person name="Rocha E.P.C."/>
            <person name="Denamur E."/>
        </authorList>
    </citation>
    <scope>NUCLEOTIDE SEQUENCE [LARGE SCALE GENOMIC DNA]</scope>
    <source>
        <strain>IAI1</strain>
    </source>
</reference>
<accession>B7M2J4</accession>
<dbReference type="EC" id="3.2.1.196" evidence="1"/>
<dbReference type="EMBL" id="CU928160">
    <property type="protein sequence ID" value="CAR00376.1"/>
    <property type="molecule type" value="Genomic_DNA"/>
</dbReference>
<dbReference type="RefSeq" id="WP_000192537.1">
    <property type="nucleotide sequence ID" value="NC_011741.1"/>
</dbReference>
<dbReference type="SMR" id="B7M2J4"/>
<dbReference type="CAZy" id="CBM48">
    <property type="family name" value="Carbohydrate-Binding Module Family 48"/>
</dbReference>
<dbReference type="CAZy" id="GH13">
    <property type="family name" value="Glycoside Hydrolase Family 13"/>
</dbReference>
<dbReference type="KEGG" id="ecr:ECIAI1_3577"/>
<dbReference type="HOGENOM" id="CLU_011725_1_1_6"/>
<dbReference type="UniPathway" id="UPA00165"/>
<dbReference type="GO" id="GO:0004133">
    <property type="term" value="F:glycogen debranching enzyme activity"/>
    <property type="evidence" value="ECO:0007669"/>
    <property type="project" value="UniProtKB-UniRule"/>
</dbReference>
<dbReference type="GO" id="GO:0004553">
    <property type="term" value="F:hydrolase activity, hydrolyzing O-glycosyl compounds"/>
    <property type="evidence" value="ECO:0007669"/>
    <property type="project" value="InterPro"/>
</dbReference>
<dbReference type="GO" id="GO:0005980">
    <property type="term" value="P:glycogen catabolic process"/>
    <property type="evidence" value="ECO:0007669"/>
    <property type="project" value="UniProtKB-UniRule"/>
</dbReference>
<dbReference type="CDD" id="cd11326">
    <property type="entry name" value="AmyAc_Glg_debranch"/>
    <property type="match status" value="1"/>
</dbReference>
<dbReference type="CDD" id="cd02856">
    <property type="entry name" value="E_set_GDE_Isoamylase_N"/>
    <property type="match status" value="1"/>
</dbReference>
<dbReference type="FunFam" id="2.60.40.10:FF:000468">
    <property type="entry name" value="Glycogen debranching enzyme"/>
    <property type="match status" value="1"/>
</dbReference>
<dbReference type="FunFam" id="3.20.20.80:FF:000031">
    <property type="entry name" value="Glycogen debranching enzyme"/>
    <property type="match status" value="1"/>
</dbReference>
<dbReference type="Gene3D" id="3.20.20.80">
    <property type="entry name" value="Glycosidases"/>
    <property type="match status" value="1"/>
</dbReference>
<dbReference type="Gene3D" id="2.60.40.1180">
    <property type="entry name" value="Golgi alpha-mannosidase II"/>
    <property type="match status" value="1"/>
</dbReference>
<dbReference type="Gene3D" id="2.60.40.10">
    <property type="entry name" value="Immunoglobulins"/>
    <property type="match status" value="1"/>
</dbReference>
<dbReference type="HAMAP" id="MF_01248">
    <property type="entry name" value="GlgX"/>
    <property type="match status" value="1"/>
</dbReference>
<dbReference type="InterPro" id="IPR040784">
    <property type="entry name" value="GlgX_C"/>
</dbReference>
<dbReference type="InterPro" id="IPR044505">
    <property type="entry name" value="GlgX_Isoamylase_N_E_set"/>
</dbReference>
<dbReference type="InterPro" id="IPR006047">
    <property type="entry name" value="Glyco_hydro_13_cat_dom"/>
</dbReference>
<dbReference type="InterPro" id="IPR004193">
    <property type="entry name" value="Glyco_hydro_13_N"/>
</dbReference>
<dbReference type="InterPro" id="IPR013780">
    <property type="entry name" value="Glyco_hydro_b"/>
</dbReference>
<dbReference type="InterPro" id="IPR022844">
    <property type="entry name" value="Glycogen_debranch_bac"/>
</dbReference>
<dbReference type="InterPro" id="IPR011837">
    <property type="entry name" value="Glycogen_debranch_GlgX"/>
</dbReference>
<dbReference type="InterPro" id="IPR017853">
    <property type="entry name" value="Glycoside_hydrolase_SF"/>
</dbReference>
<dbReference type="InterPro" id="IPR013783">
    <property type="entry name" value="Ig-like_fold"/>
</dbReference>
<dbReference type="InterPro" id="IPR014756">
    <property type="entry name" value="Ig_E-set"/>
</dbReference>
<dbReference type="NCBIfam" id="TIGR02100">
    <property type="entry name" value="glgX_debranch"/>
    <property type="match status" value="1"/>
</dbReference>
<dbReference type="NCBIfam" id="NF002983">
    <property type="entry name" value="PRK03705.1"/>
    <property type="match status" value="1"/>
</dbReference>
<dbReference type="PANTHER" id="PTHR43002">
    <property type="entry name" value="GLYCOGEN DEBRANCHING ENZYME"/>
    <property type="match status" value="1"/>
</dbReference>
<dbReference type="Pfam" id="PF00128">
    <property type="entry name" value="Alpha-amylase"/>
    <property type="match status" value="1"/>
</dbReference>
<dbReference type="Pfam" id="PF02922">
    <property type="entry name" value="CBM_48"/>
    <property type="match status" value="1"/>
</dbReference>
<dbReference type="Pfam" id="PF18390">
    <property type="entry name" value="GlgX_C"/>
    <property type="match status" value="1"/>
</dbReference>
<dbReference type="SMART" id="SM00642">
    <property type="entry name" value="Aamy"/>
    <property type="match status" value="1"/>
</dbReference>
<dbReference type="SUPFAM" id="SSF51445">
    <property type="entry name" value="(Trans)glycosidases"/>
    <property type="match status" value="1"/>
</dbReference>
<dbReference type="SUPFAM" id="SSF81296">
    <property type="entry name" value="E set domains"/>
    <property type="match status" value="1"/>
</dbReference>
<comment type="function">
    <text evidence="1">Removes maltotriose and maltotetraose chains that are attached by 1,6-alpha-linkage to the limit dextrin main chain, generating a debranched limit dextrin.</text>
</comment>
<comment type="catalytic activity">
    <reaction evidence="1">
        <text>Hydrolysis of (1-&gt;6)-alpha-D-glucosidic linkages to branches with degrees of polymerization of three or four glucose residues in limit dextrin.</text>
        <dbReference type="EC" id="3.2.1.196"/>
    </reaction>
</comment>
<comment type="pathway">
    <text evidence="1">Glycan degradation; glycogen degradation.</text>
</comment>
<comment type="similarity">
    <text evidence="1">Belongs to the glycosyl hydrolase 13 family.</text>
</comment>
<sequence length="657" mass="73599">MTQLAIGKPAPLGAHYDGQGVNFTLFSAHAERVELCVFDANGQEHRYDLPGHSGDIWHGYLPDARPGLRYGYRVHGPWQPAEGHRFNPAKLLIDPCARQIDGEFKDNPLLHAGHNEPDYRDNAAIAPKCVVVVDHYDWEDDAPPRTPWGSTIIYEAHVKGLTYLHPEIPVEIRGTYKALGHPVMINYLKQLGITALELLPVAQFASEPRLQRMGLSNYWGYNPVAMFALHPAYACSPETALHEFRDAIKALHKAGIEVILDIVLNHSAELDLDGPLFSLRGIDNRSYYWIREDGDYHNWTGCGNTLNLSHPAVVDYASACLRYWVETCHVDGFRFDLAAVMGRTPEFRQDAPLFTAIQNCPVLSQVKLIAEPWDIAPGGYQVGNFPPLFAEWNDHFRDAARRFWLHYDLPLGAFAGRFAASSDVFKRNGRLPSAAINLVTAHDGFTLRDCVCFNHKHNEANGEENRDGTNNNYSNNHGKEGLGGSLDLVERRRDSIHALLTTLLLSQGTPMLLAGDEHGHSQHGNNNAYCQDNQLTWLDWSQASSGLTAFTAALIHLRKRIPALVENRWWEEGDGNVRWLNRYAQPLSTDEWQNGPKQLQILLSDRFLIAINATLEVTEIVLPAGEWHAIPPFAGEDNPVITAVWQGPAHGLCVFQR</sequence>
<keyword id="KW-0119">Carbohydrate metabolism</keyword>
<keyword id="KW-0321">Glycogen metabolism</keyword>
<keyword id="KW-0326">Glycosidase</keyword>
<keyword id="KW-0378">Hydrolase</keyword>
<feature type="chain" id="PRO_1000139866" description="Glycogen debranching enzyme">
    <location>
        <begin position="1"/>
        <end position="657"/>
    </location>
</feature>
<feature type="region of interest" description="Disordered" evidence="2">
    <location>
        <begin position="458"/>
        <end position="479"/>
    </location>
</feature>
<feature type="compositionally biased region" description="Basic and acidic residues" evidence="2">
    <location>
        <begin position="458"/>
        <end position="467"/>
    </location>
</feature>
<feature type="active site" description="Nucleophile" evidence="1">
    <location>
        <position position="336"/>
    </location>
</feature>
<feature type="active site" description="Proton donor" evidence="1">
    <location>
        <position position="371"/>
    </location>
</feature>
<feature type="site" description="Transition state stabilizer" evidence="1">
    <location>
        <position position="443"/>
    </location>
</feature>
<evidence type="ECO:0000255" key="1">
    <source>
        <dbReference type="HAMAP-Rule" id="MF_01248"/>
    </source>
</evidence>
<evidence type="ECO:0000256" key="2">
    <source>
        <dbReference type="SAM" id="MobiDB-lite"/>
    </source>
</evidence>
<gene>
    <name evidence="1" type="primary">glgX</name>
    <name type="ordered locus">ECIAI1_3577</name>
</gene>
<protein>
    <recommendedName>
        <fullName evidence="1">Glycogen debranching enzyme</fullName>
        <ecNumber evidence="1">3.2.1.196</ecNumber>
    </recommendedName>
    <alternativeName>
        <fullName evidence="1">Limit dextrin alpha-1,6-maltotetraose-hydrolase</fullName>
    </alternativeName>
</protein>
<name>GLGX_ECO8A</name>